<evidence type="ECO:0000255" key="1">
    <source>
        <dbReference type="HAMAP-Rule" id="MF_00834"/>
    </source>
</evidence>
<evidence type="ECO:0000269" key="2">
    <source>
    </source>
</evidence>
<sequence length="429" mass="46945">MTQDDLAFDRRHIWHPYTSMTSPLPVYPVQSAQGCELQLASGEQLVDGMSSWWAAIHGYNHPHLNAAMKTQIEAMSHVMFGGITHAPAVSLCRKLVAMTPEALECVFLADSGSVAVEVSMKMALQYWQAKGESRRRFLTFRRGYHGDTFGAMSACDPDNSMHSLWAGYLPDNLFAPAPESRFDGEWDERDIVGFARLMAAHRHEIAAVILEPIVQGAGGMRLYHPEVLKRIRRMCDREGILLIADEIATGFGRTGKLFACEHADITPDILCLGKALTGGTMTLSATLTTRAVAETIRNGEAGCFMHGPTFMGNPLACAVANASLELLARGEWQVQVAAIEAQLKRELAPARAAETVADVRVLGAIGVIETHQPVNMAALQRFFVEQGVWIRPFGKLIYLMPPYVISPEQLSKLTDAVLAAVAHPAHFAP</sequence>
<comment type="function">
    <text evidence="1 2">Catalyzes the transfer of the alpha-amino group from S-adenosyl-L-methionine (SAM) to 7-keto-8-aminopelargonic acid (KAPA) to form 7,8-diaminopelargonic acid (DAPA). It is the only aminotransferase known to utilize SAM as an amino donor.</text>
</comment>
<comment type="catalytic activity">
    <reaction evidence="1">
        <text>(8S)-8-amino-7-oxononanoate + S-adenosyl-L-methionine = S-adenosyl-4-methylsulfanyl-2-oxobutanoate + (7R,8S)-7,8-diammoniononanoate</text>
        <dbReference type="Rhea" id="RHEA:16861"/>
        <dbReference type="ChEBI" id="CHEBI:16490"/>
        <dbReference type="ChEBI" id="CHEBI:59789"/>
        <dbReference type="ChEBI" id="CHEBI:149468"/>
        <dbReference type="ChEBI" id="CHEBI:149469"/>
        <dbReference type="EC" id="2.6.1.62"/>
    </reaction>
</comment>
<comment type="cofactor">
    <cofactor evidence="1">
        <name>pyridoxal 5'-phosphate</name>
        <dbReference type="ChEBI" id="CHEBI:597326"/>
    </cofactor>
</comment>
<comment type="pathway">
    <text evidence="1">Cofactor biosynthesis; biotin biosynthesis; 7,8-diaminononanoate from 8-amino-7-oxononanoate (SAM route): step 1/1.</text>
</comment>
<comment type="subunit">
    <text evidence="1">Homodimer.</text>
</comment>
<comment type="subcellular location">
    <subcellularLocation>
        <location evidence="1">Cytoplasm</location>
    </subcellularLocation>
</comment>
<comment type="similarity">
    <text evidence="1">Belongs to the class-III pyridoxal-phosphate-dependent aminotransferase family. BioA subfamily.</text>
</comment>
<dbReference type="EC" id="2.6.1.62" evidence="1"/>
<dbReference type="EMBL" id="U38519">
    <property type="protein sequence ID" value="AAC44533.1"/>
    <property type="molecule type" value="Genomic_DNA"/>
</dbReference>
<dbReference type="PIR" id="JC5005">
    <property type="entry name" value="JC5005"/>
</dbReference>
<dbReference type="SMR" id="P53656"/>
<dbReference type="UniPathway" id="UPA00078">
    <property type="reaction ID" value="UER00160"/>
</dbReference>
<dbReference type="GO" id="GO:0005737">
    <property type="term" value="C:cytoplasm"/>
    <property type="evidence" value="ECO:0007669"/>
    <property type="project" value="UniProtKB-SubCell"/>
</dbReference>
<dbReference type="GO" id="GO:0004015">
    <property type="term" value="F:adenosylmethionine-8-amino-7-oxononanoate transaminase activity"/>
    <property type="evidence" value="ECO:0007669"/>
    <property type="project" value="UniProtKB-UniRule"/>
</dbReference>
<dbReference type="GO" id="GO:0030170">
    <property type="term" value="F:pyridoxal phosphate binding"/>
    <property type="evidence" value="ECO:0007669"/>
    <property type="project" value="UniProtKB-UniRule"/>
</dbReference>
<dbReference type="GO" id="GO:0009102">
    <property type="term" value="P:biotin biosynthetic process"/>
    <property type="evidence" value="ECO:0007669"/>
    <property type="project" value="UniProtKB-UniRule"/>
</dbReference>
<dbReference type="CDD" id="cd00610">
    <property type="entry name" value="OAT_like"/>
    <property type="match status" value="1"/>
</dbReference>
<dbReference type="FunFam" id="3.40.640.10:FF:000041">
    <property type="entry name" value="Adenosylmethionine-8-amino-7-oxononanoate aminotransferase"/>
    <property type="match status" value="1"/>
</dbReference>
<dbReference type="Gene3D" id="3.90.1150.10">
    <property type="entry name" value="Aspartate Aminotransferase, domain 1"/>
    <property type="match status" value="1"/>
</dbReference>
<dbReference type="Gene3D" id="3.40.640.10">
    <property type="entry name" value="Type I PLP-dependent aspartate aminotransferase-like (Major domain)"/>
    <property type="match status" value="1"/>
</dbReference>
<dbReference type="HAMAP" id="MF_00834">
    <property type="entry name" value="BioA"/>
    <property type="match status" value="1"/>
</dbReference>
<dbReference type="InterPro" id="IPR005814">
    <property type="entry name" value="Aminotrans_3"/>
</dbReference>
<dbReference type="InterPro" id="IPR049704">
    <property type="entry name" value="Aminotrans_3_PPA_site"/>
</dbReference>
<dbReference type="InterPro" id="IPR005815">
    <property type="entry name" value="BioA"/>
</dbReference>
<dbReference type="InterPro" id="IPR015424">
    <property type="entry name" value="PyrdxlP-dep_Trfase"/>
</dbReference>
<dbReference type="InterPro" id="IPR015421">
    <property type="entry name" value="PyrdxlP-dep_Trfase_major"/>
</dbReference>
<dbReference type="InterPro" id="IPR015422">
    <property type="entry name" value="PyrdxlP-dep_Trfase_small"/>
</dbReference>
<dbReference type="NCBIfam" id="TIGR00508">
    <property type="entry name" value="bioA"/>
    <property type="match status" value="1"/>
</dbReference>
<dbReference type="NCBIfam" id="NF004624">
    <property type="entry name" value="PRK05964.1"/>
    <property type="match status" value="1"/>
</dbReference>
<dbReference type="NCBIfam" id="NF005940">
    <property type="entry name" value="PRK07986.1"/>
    <property type="match status" value="1"/>
</dbReference>
<dbReference type="PANTHER" id="PTHR42684">
    <property type="entry name" value="ADENOSYLMETHIONINE-8-AMINO-7-OXONONANOATE AMINOTRANSFERASE"/>
    <property type="match status" value="1"/>
</dbReference>
<dbReference type="PANTHER" id="PTHR42684:SF17">
    <property type="entry name" value="ADENOSYLMETHIONINE-8-AMINO-7-OXONONANOATE AMINOTRANSFERASE"/>
    <property type="match status" value="1"/>
</dbReference>
<dbReference type="Pfam" id="PF00202">
    <property type="entry name" value="Aminotran_3"/>
    <property type="match status" value="1"/>
</dbReference>
<dbReference type="PIRSF" id="PIRSF000521">
    <property type="entry name" value="Transaminase_4ab_Lys_Orn"/>
    <property type="match status" value="1"/>
</dbReference>
<dbReference type="SUPFAM" id="SSF53383">
    <property type="entry name" value="PLP-dependent transferases"/>
    <property type="match status" value="1"/>
</dbReference>
<dbReference type="PROSITE" id="PS00600">
    <property type="entry name" value="AA_TRANSFER_CLASS_3"/>
    <property type="match status" value="1"/>
</dbReference>
<name>BIOA_PSEVU</name>
<reference key="1">
    <citation type="journal article" date="1996" name="Gene">
        <title>Isolation and characterization of the Erwinia herbicola bio operon and the sequences of the bioA and bioB genes.</title>
        <authorList>
            <person name="Wu C.-H."/>
            <person name="Chen H.-Y."/>
            <person name="Shiuan D."/>
        </authorList>
    </citation>
    <scope>NUCLEOTIDE SEQUENCE [GENOMIC DNA]</scope>
    <scope>FUNCTION</scope>
    <source>
        <strain>ATCC 39368 / Eho10</strain>
    </source>
</reference>
<accession>P53656</accession>
<organism>
    <name type="scientific">Pseudescherichia vulneris</name>
    <name type="common">Escherichia vulneris</name>
    <dbReference type="NCBI Taxonomy" id="566"/>
    <lineage>
        <taxon>Bacteria</taxon>
        <taxon>Pseudomonadati</taxon>
        <taxon>Pseudomonadota</taxon>
        <taxon>Gammaproteobacteria</taxon>
        <taxon>Enterobacterales</taxon>
        <taxon>Enterobacteriaceae</taxon>
        <taxon>Pseudescherichia</taxon>
    </lineage>
</organism>
<protein>
    <recommendedName>
        <fullName evidence="1">Adenosylmethionine-8-amino-7-oxononanoate aminotransferase</fullName>
        <ecNumber evidence="1">2.6.1.62</ecNumber>
    </recommendedName>
    <alternativeName>
        <fullName evidence="1">7,8-diamino-pelargonic acid aminotransferase</fullName>
        <shortName evidence="1">DAPA AT</shortName>
        <shortName evidence="1">DAPA aminotransferase</shortName>
    </alternativeName>
    <alternativeName>
        <fullName evidence="1">7,8-diaminononanoate synthase</fullName>
        <shortName evidence="1">DANS</shortName>
    </alternativeName>
    <alternativeName>
        <fullName evidence="1">Diaminopelargonic acid synthase</fullName>
    </alternativeName>
</protein>
<gene>
    <name evidence="1" type="primary">bioA</name>
</gene>
<keyword id="KW-0032">Aminotransferase</keyword>
<keyword id="KW-0093">Biotin biosynthesis</keyword>
<keyword id="KW-0963">Cytoplasm</keyword>
<keyword id="KW-0663">Pyridoxal phosphate</keyword>
<keyword id="KW-0949">S-adenosyl-L-methionine</keyword>
<keyword id="KW-0808">Transferase</keyword>
<proteinExistence type="inferred from homology"/>
<feature type="chain" id="PRO_0000120368" description="Adenosylmethionine-8-amino-7-oxononanoate aminotransferase">
    <location>
        <begin position="1"/>
        <end position="429"/>
    </location>
</feature>
<feature type="binding site" evidence="1">
    <location>
        <position position="52"/>
    </location>
    <ligand>
        <name>substrate</name>
    </ligand>
</feature>
<feature type="binding site" evidence="1">
    <location>
        <begin position="112"/>
        <end position="113"/>
    </location>
    <ligand>
        <name>pyridoxal 5'-phosphate</name>
        <dbReference type="ChEBI" id="CHEBI:597326"/>
    </ligand>
</feature>
<feature type="binding site" evidence="1">
    <location>
        <position position="144"/>
    </location>
    <ligand>
        <name>substrate</name>
    </ligand>
</feature>
<feature type="binding site" evidence="1">
    <location>
        <position position="245"/>
    </location>
    <ligand>
        <name>pyridoxal 5'-phosphate</name>
        <dbReference type="ChEBI" id="CHEBI:597326"/>
    </ligand>
</feature>
<feature type="binding site" evidence="1">
    <location>
        <position position="274"/>
    </location>
    <ligand>
        <name>substrate</name>
    </ligand>
</feature>
<feature type="binding site" evidence="1">
    <location>
        <position position="307"/>
    </location>
    <ligand>
        <name>substrate</name>
    </ligand>
</feature>
<feature type="binding site" evidence="1">
    <location>
        <begin position="308"/>
        <end position="309"/>
    </location>
    <ligand>
        <name>pyridoxal 5'-phosphate</name>
        <dbReference type="ChEBI" id="CHEBI:597326"/>
    </ligand>
</feature>
<feature type="binding site" evidence="1">
    <location>
        <position position="391"/>
    </location>
    <ligand>
        <name>substrate</name>
    </ligand>
</feature>
<feature type="site" description="Participates in the substrate recognition with KAPA and in a stacking interaction with the adenine ring of SAM" evidence="1">
    <location>
        <position position="17"/>
    </location>
</feature>
<feature type="modified residue" description="N6-(pyridoxal phosphate)lysine" evidence="1">
    <location>
        <position position="274"/>
    </location>
</feature>